<name>CAPSD_ICRSV</name>
<feature type="chain" id="PRO_0000401082" description="Capsid protein">
    <location>
        <begin position="1"/>
        <end position="325"/>
    </location>
</feature>
<feature type="region of interest" description="Disordered" evidence="2">
    <location>
        <begin position="30"/>
        <end position="89"/>
    </location>
</feature>
<feature type="compositionally biased region" description="Pro residues" evidence="2">
    <location>
        <begin position="59"/>
        <end position="84"/>
    </location>
</feature>
<accession>Q9QEE7</accession>
<gene>
    <name type="ORF">ORF5</name>
</gene>
<evidence type="ECO:0000250" key="1"/>
<evidence type="ECO:0000256" key="2">
    <source>
        <dbReference type="SAM" id="MobiDB-lite"/>
    </source>
</evidence>
<evidence type="ECO:0000305" key="3"/>
<reference key="1">
    <citation type="journal article" date="2000" name="Arch. Virol.">
        <title>Indian citrus ringspot virus: a proposed new species with some affinities to potex-, carla-, fovea- and allexiviruses.</title>
        <authorList>
            <person name="Rustici G."/>
            <person name="Accotto G.P."/>
            <person name="Noris E."/>
            <person name="Masenga V."/>
            <person name="Luisoni E."/>
            <person name="Milne R.G."/>
        </authorList>
    </citation>
    <scope>NUCLEOTIDE SEQUENCE [GENOMIC RNA]</scope>
</reference>
<reference key="2">
    <citation type="submission" date="2003-03" db="EMBL/GenBank/DDBJ databases">
        <title>Indian citrus ringspot virus - coat protein gene from Abohar, India.</title>
        <authorList>
            <person name="Hoa N.V."/>
            <person name="Ahlawat Y.S."/>
        </authorList>
    </citation>
    <scope>NUCLEOTIDE SEQUENCE [GENOMIC RNA]</scope>
</reference>
<reference key="3">
    <citation type="journal article" date="2002" name="Arch. Virol.">
        <title>Nucleotide sequence, genome organisation and phylogenetic analysis of Indian citrus ringspot virus.</title>
        <authorList>
            <person name="Rustici G."/>
            <person name="Milne R.G."/>
            <person name="Accotto G.P."/>
        </authorList>
    </citation>
    <scope>NUCLEOTIDE SEQUENCE [GENOMIC RNA]</scope>
</reference>
<sequence length="325" mass="35791">MSFDYTDPTFRNYPFPHYCDFDRHQHCDHDLRTNPPPTEPPSRKSKLMSTSENKGKQPLHPPPTEGFPKPPPPPSSTPTTPTPPDQTKAPEPIEKRIIHAFHAEPKTHTNGEAPPAFNPNNMNAVPLNLLNINLKYSPVTNSIANPKQTEAIGKAWVRILQIDPANVFLYAIDLARACADAGSSPEADIIGANEDLNPVVERNALAGVVRDFCPLRAFCAYYSRVVWNLMIKADQPPANWMKSGIDEGAKFAAFDFFHGVLSPASLYVPLERHPTAAERIANQAMFAVKIANAPGNGSELTMDHVAFTKGRITADSKPRPTPFNT</sequence>
<dbReference type="EMBL" id="AF184962">
    <property type="protein sequence ID" value="AAF01313.1"/>
    <property type="molecule type" value="Genomic_RNA"/>
</dbReference>
<dbReference type="EMBL" id="AF406744">
    <property type="protein sequence ID" value="AAK97526.1"/>
    <property type="molecule type" value="Genomic_RNA"/>
</dbReference>
<dbReference type="EMBL" id="AY255009">
    <property type="protein sequence ID" value="AAO72988.1"/>
    <property type="molecule type" value="Genomic_RNA"/>
</dbReference>
<dbReference type="RefSeq" id="NP_203557.1">
    <property type="nucleotide sequence ID" value="NC_003093.1"/>
</dbReference>
<dbReference type="SMR" id="Q9QEE7"/>
<dbReference type="KEGG" id="vg:922110"/>
<dbReference type="Proteomes" id="UP000000394">
    <property type="component" value="Segment"/>
</dbReference>
<dbReference type="GO" id="GO:0019029">
    <property type="term" value="C:helical viral capsid"/>
    <property type="evidence" value="ECO:0007669"/>
    <property type="project" value="UniProtKB-KW"/>
</dbReference>
<dbReference type="GO" id="GO:1990904">
    <property type="term" value="C:ribonucleoprotein complex"/>
    <property type="evidence" value="ECO:0007669"/>
    <property type="project" value="UniProtKB-KW"/>
</dbReference>
<dbReference type="GO" id="GO:0005198">
    <property type="term" value="F:structural molecule activity"/>
    <property type="evidence" value="ECO:0007669"/>
    <property type="project" value="InterPro"/>
</dbReference>
<dbReference type="InterPro" id="IPR000052">
    <property type="entry name" value="Pltvir_coat"/>
</dbReference>
<dbReference type="Pfam" id="PF00286">
    <property type="entry name" value="Flexi_CP"/>
    <property type="match status" value="1"/>
</dbReference>
<dbReference type="PRINTS" id="PR00232">
    <property type="entry name" value="POTXCARLCOAT"/>
</dbReference>
<dbReference type="PROSITE" id="PS00418">
    <property type="entry name" value="POTEX_CARLAVIRUS_COAT"/>
    <property type="match status" value="1"/>
</dbReference>
<keyword id="KW-0167">Capsid protein</keyword>
<keyword id="KW-1139">Helical capsid protein</keyword>
<keyword id="KW-1185">Reference proteome</keyword>
<keyword id="KW-0687">Ribonucleoprotein</keyword>
<keyword id="KW-0946">Virion</keyword>
<proteinExistence type="inferred from homology"/>
<protein>
    <recommendedName>
        <fullName>Capsid protein</fullName>
        <shortName>CP</shortName>
    </recommendedName>
    <alternativeName>
        <fullName>Coat protein</fullName>
    </alternativeName>
</protein>
<comment type="function">
    <text evidence="1">Required for genome encapsidation. Forms ribonucleoprotein complexes along with TGB1 helicase and viral RNA (By similarity).</text>
</comment>
<comment type="subcellular location">
    <subcellularLocation>
        <location evidence="3">Virion</location>
    </subcellularLocation>
</comment>
<comment type="similarity">
    <text evidence="3">Belongs to the potexviruses coat protein family.</text>
</comment>
<organismHost>
    <name type="scientific">Citrus</name>
    <dbReference type="NCBI Taxonomy" id="2706"/>
</organismHost>
<organism>
    <name type="scientific">Indian citrus ringspot virus (isolate Kinnow mandarin/India/K1/1996)</name>
    <name type="common">ICRSV</name>
    <dbReference type="NCBI Taxonomy" id="651357"/>
    <lineage>
        <taxon>Viruses</taxon>
        <taxon>Riboviria</taxon>
        <taxon>Orthornavirae</taxon>
        <taxon>Kitrinoviricota</taxon>
        <taxon>Alsuviricetes</taxon>
        <taxon>Tymovirales</taxon>
        <taxon>Alphaflexiviridae</taxon>
        <taxon>Potexvirus</taxon>
        <taxon>Mandarivirus</taxon>
        <taxon>Indian citrus ringspot virus</taxon>
    </lineage>
</organism>